<gene>
    <name evidence="1" type="primary">hutH</name>
    <name type="ordered locus">SAUSA300_0008</name>
</gene>
<keyword id="KW-0963">Cytoplasm</keyword>
<keyword id="KW-0369">Histidine metabolism</keyword>
<keyword id="KW-0456">Lyase</keyword>
<organism>
    <name type="scientific">Staphylococcus aureus (strain USA300)</name>
    <dbReference type="NCBI Taxonomy" id="367830"/>
    <lineage>
        <taxon>Bacteria</taxon>
        <taxon>Bacillati</taxon>
        <taxon>Bacillota</taxon>
        <taxon>Bacilli</taxon>
        <taxon>Bacillales</taxon>
        <taxon>Staphylococcaceae</taxon>
        <taxon>Staphylococcus</taxon>
    </lineage>
</organism>
<dbReference type="EC" id="4.3.1.3" evidence="1"/>
<dbReference type="EMBL" id="CP000255">
    <property type="protein sequence ID" value="ABD22111.1"/>
    <property type="molecule type" value="Genomic_DNA"/>
</dbReference>
<dbReference type="RefSeq" id="WP_000177464.1">
    <property type="nucleotide sequence ID" value="NZ_CP027476.1"/>
</dbReference>
<dbReference type="SMR" id="Q2FKP8"/>
<dbReference type="KEGG" id="saa:SAUSA300_0008"/>
<dbReference type="HOGENOM" id="CLU_014801_4_0_9"/>
<dbReference type="OMA" id="YSLRCMP"/>
<dbReference type="UniPathway" id="UPA00379">
    <property type="reaction ID" value="UER00549"/>
</dbReference>
<dbReference type="Proteomes" id="UP000001939">
    <property type="component" value="Chromosome"/>
</dbReference>
<dbReference type="GO" id="GO:0005737">
    <property type="term" value="C:cytoplasm"/>
    <property type="evidence" value="ECO:0007669"/>
    <property type="project" value="UniProtKB-SubCell"/>
</dbReference>
<dbReference type="GO" id="GO:0004397">
    <property type="term" value="F:histidine ammonia-lyase activity"/>
    <property type="evidence" value="ECO:0007669"/>
    <property type="project" value="UniProtKB-UniRule"/>
</dbReference>
<dbReference type="GO" id="GO:0019556">
    <property type="term" value="P:L-histidine catabolic process to glutamate and formamide"/>
    <property type="evidence" value="ECO:0007669"/>
    <property type="project" value="UniProtKB-UniPathway"/>
</dbReference>
<dbReference type="GO" id="GO:0019557">
    <property type="term" value="P:L-histidine catabolic process to glutamate and formate"/>
    <property type="evidence" value="ECO:0007669"/>
    <property type="project" value="UniProtKB-UniPathway"/>
</dbReference>
<dbReference type="CDD" id="cd00332">
    <property type="entry name" value="PAL-HAL"/>
    <property type="match status" value="1"/>
</dbReference>
<dbReference type="FunFam" id="1.10.275.10:FF:000008">
    <property type="entry name" value="Histidine ammonia-lyase"/>
    <property type="match status" value="1"/>
</dbReference>
<dbReference type="FunFam" id="1.20.200.10:FF:000003">
    <property type="entry name" value="Histidine ammonia-lyase"/>
    <property type="match status" value="1"/>
</dbReference>
<dbReference type="Gene3D" id="1.20.200.10">
    <property type="entry name" value="Fumarase/aspartase (Central domain)"/>
    <property type="match status" value="1"/>
</dbReference>
<dbReference type="Gene3D" id="1.10.275.10">
    <property type="entry name" value="Fumarase/aspartase (N-terminal domain)"/>
    <property type="match status" value="1"/>
</dbReference>
<dbReference type="HAMAP" id="MF_00229">
    <property type="entry name" value="His_ammonia_lyase"/>
    <property type="match status" value="1"/>
</dbReference>
<dbReference type="InterPro" id="IPR001106">
    <property type="entry name" value="Aromatic_Lyase"/>
</dbReference>
<dbReference type="InterPro" id="IPR024083">
    <property type="entry name" value="Fumarase/histidase_N"/>
</dbReference>
<dbReference type="InterPro" id="IPR005921">
    <property type="entry name" value="HutH"/>
</dbReference>
<dbReference type="InterPro" id="IPR008948">
    <property type="entry name" value="L-Aspartase-like"/>
</dbReference>
<dbReference type="InterPro" id="IPR022313">
    <property type="entry name" value="Phe/His_NH3-lyase_AS"/>
</dbReference>
<dbReference type="NCBIfam" id="TIGR01225">
    <property type="entry name" value="hutH"/>
    <property type="match status" value="1"/>
</dbReference>
<dbReference type="NCBIfam" id="NF006871">
    <property type="entry name" value="PRK09367.1"/>
    <property type="match status" value="1"/>
</dbReference>
<dbReference type="PANTHER" id="PTHR10362">
    <property type="entry name" value="HISTIDINE AMMONIA-LYASE"/>
    <property type="match status" value="1"/>
</dbReference>
<dbReference type="Pfam" id="PF00221">
    <property type="entry name" value="Lyase_aromatic"/>
    <property type="match status" value="1"/>
</dbReference>
<dbReference type="SUPFAM" id="SSF48557">
    <property type="entry name" value="L-aspartase-like"/>
    <property type="match status" value="1"/>
</dbReference>
<dbReference type="PROSITE" id="PS00488">
    <property type="entry name" value="PAL_HISTIDASE"/>
    <property type="match status" value="1"/>
</dbReference>
<proteinExistence type="inferred from homology"/>
<protein>
    <recommendedName>
        <fullName evidence="1">Histidine ammonia-lyase</fullName>
        <shortName evidence="1">Histidase</shortName>
        <ecNumber evidence="1">4.3.1.3</ecNumber>
    </recommendedName>
</protein>
<feature type="chain" id="PRO_1000021569" description="Histidine ammonia-lyase">
    <location>
        <begin position="1"/>
        <end position="504"/>
    </location>
</feature>
<feature type="modified residue" description="2,3-didehydroalanine (Ser)" evidence="1">
    <location>
        <position position="143"/>
    </location>
</feature>
<feature type="cross-link" description="5-imidazolinone (Ala-Gly)" evidence="1">
    <location>
        <begin position="142"/>
        <end position="144"/>
    </location>
</feature>
<comment type="catalytic activity">
    <reaction evidence="1">
        <text>L-histidine = trans-urocanate + NH4(+)</text>
        <dbReference type="Rhea" id="RHEA:21232"/>
        <dbReference type="ChEBI" id="CHEBI:17771"/>
        <dbReference type="ChEBI" id="CHEBI:28938"/>
        <dbReference type="ChEBI" id="CHEBI:57595"/>
        <dbReference type="EC" id="4.3.1.3"/>
    </reaction>
</comment>
<comment type="pathway">
    <text evidence="1">Amino-acid degradation; L-histidine degradation into L-glutamate; N-formimidoyl-L-glutamate from L-histidine: step 1/3.</text>
</comment>
<comment type="subcellular location">
    <subcellularLocation>
        <location evidence="1">Cytoplasm</location>
    </subcellularLocation>
</comment>
<comment type="PTM">
    <text evidence="1">Contains an active site 4-methylidene-imidazol-5-one (MIO), which is formed autocatalytically by cyclization and dehydration of residues Ala-Ser-Gly.</text>
</comment>
<comment type="similarity">
    <text evidence="1">Belongs to the PAL/histidase family.</text>
</comment>
<sequence length="504" mass="56076">MTLYLDGETLTIEDIKSFLQQQSKIEIIDDALERVKKSRAVVERIIENEETVYGITTGFGLFSDVRIDPTQYNELQVNLIRSHACGLGEPFSKEVALVMMILRLNTLLKGHSGATLELVRQLQFFINERIIPIIPQQGSLGASGDLAPLSHLALALIGEGKVLYRGEEKDSDDVLRELNRQPLNLQAKEGLALINGTQAMTAQGVISYIEAEDLGYQSEWIAALTHQSLNGIIDAYRHDVHAVRNFQEQINVAARMRDWLEGSTLTTRQSEIRVQDAYTLRCIPQIHGASFQVFNYVKQQLEFEMNAANDNPLIFEEANETFVISGGNFHGQPIAFALDHLKLGVSELANVSERRLERLVNPQLNGDLPAFLSPEPGLQSGAMIMQYAAASLVSENKTLAHPASVDSITSSANQEDHVSMGTTAARHGYQIIENARRVLAIECVIALQAAELKGVEGLSPKTRRKYDEFRSIVPSITHDRQFHKDIEAVAQYLKQSIYQTTACH</sequence>
<accession>Q2FKP8</accession>
<name>HUTH_STAA3</name>
<reference key="1">
    <citation type="journal article" date="2006" name="Lancet">
        <title>Complete genome sequence of USA300, an epidemic clone of community-acquired meticillin-resistant Staphylococcus aureus.</title>
        <authorList>
            <person name="Diep B.A."/>
            <person name="Gill S.R."/>
            <person name="Chang R.F."/>
            <person name="Phan T.H."/>
            <person name="Chen J.H."/>
            <person name="Davidson M.G."/>
            <person name="Lin F."/>
            <person name="Lin J."/>
            <person name="Carleton H.A."/>
            <person name="Mongodin E.F."/>
            <person name="Sensabaugh G.F."/>
            <person name="Perdreau-Remington F."/>
        </authorList>
    </citation>
    <scope>NUCLEOTIDE SEQUENCE [LARGE SCALE GENOMIC DNA]</scope>
    <source>
        <strain>USA300</strain>
    </source>
</reference>
<evidence type="ECO:0000255" key="1">
    <source>
        <dbReference type="HAMAP-Rule" id="MF_00229"/>
    </source>
</evidence>